<organism>
    <name type="scientific">Xenopus laevis</name>
    <name type="common">African clawed frog</name>
    <dbReference type="NCBI Taxonomy" id="8355"/>
    <lineage>
        <taxon>Eukaryota</taxon>
        <taxon>Metazoa</taxon>
        <taxon>Chordata</taxon>
        <taxon>Craniata</taxon>
        <taxon>Vertebrata</taxon>
        <taxon>Euteleostomi</taxon>
        <taxon>Amphibia</taxon>
        <taxon>Batrachia</taxon>
        <taxon>Anura</taxon>
        <taxon>Pipoidea</taxon>
        <taxon>Pipidae</taxon>
        <taxon>Xenopodinae</taxon>
        <taxon>Xenopus</taxon>
        <taxon>Xenopus</taxon>
    </lineage>
</organism>
<comment type="function">
    <text evidence="1">May play a role during muscle differentiation.</text>
</comment>
<comment type="subcellular location">
    <subcellularLocation>
        <location evidence="1">Cytoplasm</location>
    </subcellularLocation>
    <subcellularLocation>
        <location evidence="1">Golgi apparatus</location>
    </subcellularLocation>
    <subcellularLocation>
        <location evidence="1">Cell membrane</location>
    </subcellularLocation>
</comment>
<accession>Q08AW4</accession>
<sequence>MEALEVDDISPALEVTEDFFNSFDKLENGVHQSHVFGIHQVPEFLGNEISNKMKEQADGQNANTSQRSIIWERCKSSLFDAKTMNGIHAKEQNESTKRTYSDDPLLSEKEKGTSTFNLLRRLDRPHSVNDSLDHLEDAPKFKPGHNRSRSDVSHIDWKNIRKPAPLQRSSSQGMHCTSPFSEPRNKNMEANNEVRSSFTNILKKGFLETRITPESFWKGCYAEISQYELHIYGSDYSGNHNATDTYHLSHIESITITGSHETKLVNVIMTDDRYLQLKADSAWEAIDWGQKLWEAICALNLVPNYRSIHQDILKKQNNFSDGIRGCMENNVNKLTPSAMNISNGNQKNIIKTGTLYRLTIQSNWKAFTFVLSNSHFAAYQPSCLDEDPLLSYNIDACIAVQMDMLDGYDSCFQVIFPQDVLRLRTETRQRAQEWMDAIISAANSARKSDQSLLVPLRKKSKENQSVKDLQRSKRQSVTTSFLSLLTSLALERGLTAQSFKCAGCQRPIGLSNEKAKVCSYSGWYYCSTCHVDDGFIIPARLIHNWDTSKHKVSKQAKEFLEYVYEEPLIDVHQENPLLYRHVDALAHVVRLRQQLKSLRAYLFSCRAVVAEDLRRRIFPREYLFQQIHLYSLSDLQQVVEGKLAPFLLKIIKFATSHVYSCSLCSQKGFICEICNNGEILYPFEENSTSRCENCGAVFHSDCKVRTVPCPKCVRKELQKKQKSFWQQLDMDGSLDEACSMFELSYQST</sequence>
<feature type="chain" id="PRO_0000326036" description="Pleckstrin homology domain-containing family M member 3">
    <location>
        <begin position="1"/>
        <end position="748"/>
    </location>
</feature>
<feature type="domain" description="PH 1" evidence="2">
    <location>
        <begin position="200"/>
        <end position="297"/>
    </location>
</feature>
<feature type="domain" description="PH 2" evidence="2">
    <location>
        <begin position="348"/>
        <end position="443"/>
    </location>
</feature>
<feature type="zinc finger region" description="Phorbol-ester/DAG-type">
    <location>
        <begin position="656"/>
        <end position="709"/>
    </location>
</feature>
<feature type="region of interest" description="Disordered" evidence="3">
    <location>
        <begin position="88"/>
        <end position="107"/>
    </location>
</feature>
<feature type="region of interest" description="Disordered" evidence="3">
    <location>
        <begin position="129"/>
        <end position="187"/>
    </location>
</feature>
<feature type="compositionally biased region" description="Basic and acidic residues" evidence="3">
    <location>
        <begin position="129"/>
        <end position="140"/>
    </location>
</feature>
<feature type="compositionally biased region" description="Basic and acidic residues" evidence="3">
    <location>
        <begin position="148"/>
        <end position="159"/>
    </location>
</feature>
<feature type="compositionally biased region" description="Polar residues" evidence="3">
    <location>
        <begin position="167"/>
        <end position="180"/>
    </location>
</feature>
<evidence type="ECO:0000250" key="1">
    <source>
        <dbReference type="UniProtKB" id="Q8BM47"/>
    </source>
</evidence>
<evidence type="ECO:0000255" key="2">
    <source>
        <dbReference type="PROSITE-ProRule" id="PRU00145"/>
    </source>
</evidence>
<evidence type="ECO:0000256" key="3">
    <source>
        <dbReference type="SAM" id="MobiDB-lite"/>
    </source>
</evidence>
<name>PKHM3_XENLA</name>
<reference key="1">
    <citation type="submission" date="2006-10" db="EMBL/GenBank/DDBJ databases">
        <authorList>
            <consortium name="NIH - Xenopus Gene Collection (XGC) project"/>
        </authorList>
    </citation>
    <scope>NUCLEOTIDE SEQUENCE [LARGE SCALE MRNA]</scope>
    <source>
        <tissue>Ovary</tissue>
    </source>
</reference>
<keyword id="KW-1003">Cell membrane</keyword>
<keyword id="KW-0963">Cytoplasm</keyword>
<keyword id="KW-0333">Golgi apparatus</keyword>
<keyword id="KW-0472">Membrane</keyword>
<keyword id="KW-0479">Metal-binding</keyword>
<keyword id="KW-1185">Reference proteome</keyword>
<keyword id="KW-0677">Repeat</keyword>
<keyword id="KW-0862">Zinc</keyword>
<keyword id="KW-0863">Zinc-finger</keyword>
<gene>
    <name type="primary">plekhm3</name>
</gene>
<dbReference type="EMBL" id="BC124982">
    <property type="protein sequence ID" value="AAI24983.1"/>
    <property type="molecule type" value="mRNA"/>
</dbReference>
<dbReference type="RefSeq" id="NP_001121317.1">
    <property type="nucleotide sequence ID" value="NM_001127845.1"/>
</dbReference>
<dbReference type="RefSeq" id="XP_018089434.1">
    <property type="nucleotide sequence ID" value="XM_018233945.1"/>
</dbReference>
<dbReference type="RefSeq" id="XP_018089435.1">
    <property type="nucleotide sequence ID" value="XM_018233946.1"/>
</dbReference>
<dbReference type="SMR" id="Q08AW4"/>
<dbReference type="GeneID" id="100158401"/>
<dbReference type="KEGG" id="xla:100158401"/>
<dbReference type="AGR" id="Xenbase:XB-GENE-5825077"/>
<dbReference type="CTD" id="100158401"/>
<dbReference type="Xenbase" id="XB-GENE-5825077">
    <property type="gene designation" value="plekhm3.L"/>
</dbReference>
<dbReference type="OMA" id="CVHRELH"/>
<dbReference type="OrthoDB" id="62364at2759"/>
<dbReference type="Proteomes" id="UP000186698">
    <property type="component" value="Chromosome 9_10L"/>
</dbReference>
<dbReference type="Bgee" id="100158401">
    <property type="expression patterns" value="Expressed in testis and 19 other cell types or tissues"/>
</dbReference>
<dbReference type="GO" id="GO:0005737">
    <property type="term" value="C:cytoplasm"/>
    <property type="evidence" value="ECO:0000250"/>
    <property type="project" value="UniProtKB"/>
</dbReference>
<dbReference type="GO" id="GO:0005794">
    <property type="term" value="C:Golgi apparatus"/>
    <property type="evidence" value="ECO:0000250"/>
    <property type="project" value="UniProtKB"/>
</dbReference>
<dbReference type="GO" id="GO:0005886">
    <property type="term" value="C:plasma membrane"/>
    <property type="evidence" value="ECO:0007669"/>
    <property type="project" value="UniProtKB-SubCell"/>
</dbReference>
<dbReference type="GO" id="GO:0008270">
    <property type="term" value="F:zinc ion binding"/>
    <property type="evidence" value="ECO:0007669"/>
    <property type="project" value="UniProtKB-KW"/>
</dbReference>
<dbReference type="GO" id="GO:0045445">
    <property type="term" value="P:myoblast differentiation"/>
    <property type="evidence" value="ECO:0000250"/>
    <property type="project" value="UniProtKB"/>
</dbReference>
<dbReference type="CDD" id="cd14674">
    <property type="entry name" value="PH_PLEKHM3_1"/>
    <property type="match status" value="1"/>
</dbReference>
<dbReference type="CDD" id="cd13327">
    <property type="entry name" value="PH_PLEKHM3_2"/>
    <property type="match status" value="1"/>
</dbReference>
<dbReference type="FunFam" id="2.30.29.30:FF:000257">
    <property type="entry name" value="Pleckstrin homology domain-containing family M member 3"/>
    <property type="match status" value="1"/>
</dbReference>
<dbReference type="FunFam" id="2.30.29.30:FF:000271">
    <property type="entry name" value="pleckstrin homology domain-containing family M member 3"/>
    <property type="match status" value="1"/>
</dbReference>
<dbReference type="Gene3D" id="2.30.29.30">
    <property type="entry name" value="Pleckstrin-homology domain (PH domain)/Phosphotyrosine-binding domain (PTB)"/>
    <property type="match status" value="2"/>
</dbReference>
<dbReference type="InterPro" id="IPR051366">
    <property type="entry name" value="DEF8"/>
</dbReference>
<dbReference type="InterPro" id="IPR011993">
    <property type="entry name" value="PH-like_dom_sf"/>
</dbReference>
<dbReference type="InterPro" id="IPR001849">
    <property type="entry name" value="PH_domain"/>
</dbReference>
<dbReference type="InterPro" id="IPR037812">
    <property type="entry name" value="PLEKHM3_PH_1"/>
</dbReference>
<dbReference type="InterPro" id="IPR025258">
    <property type="entry name" value="RH_dom"/>
</dbReference>
<dbReference type="PANTHER" id="PTHR12326">
    <property type="entry name" value="PLECKSTRIN HOMOLOGY DOMAIN CONTAINING PROTEIN"/>
    <property type="match status" value="1"/>
</dbReference>
<dbReference type="PANTHER" id="PTHR12326:SF10">
    <property type="entry name" value="PLECKSTRIN HOMOLOGY DOMAIN-CONTAINING FAMILY M MEMBER 3"/>
    <property type="match status" value="1"/>
</dbReference>
<dbReference type="Pfam" id="PF00169">
    <property type="entry name" value="PH"/>
    <property type="match status" value="1"/>
</dbReference>
<dbReference type="Pfam" id="PF13901">
    <property type="entry name" value="RH_dom"/>
    <property type="match status" value="1"/>
</dbReference>
<dbReference type="SMART" id="SM01175">
    <property type="entry name" value="DUF4206"/>
    <property type="match status" value="1"/>
</dbReference>
<dbReference type="SMART" id="SM00233">
    <property type="entry name" value="PH"/>
    <property type="match status" value="2"/>
</dbReference>
<dbReference type="SUPFAM" id="SSF50729">
    <property type="entry name" value="PH domain-like"/>
    <property type="match status" value="2"/>
</dbReference>
<dbReference type="PROSITE" id="PS50003">
    <property type="entry name" value="PH_DOMAIN"/>
    <property type="match status" value="1"/>
</dbReference>
<protein>
    <recommendedName>
        <fullName>Pleckstrin homology domain-containing family M member 3</fullName>
        <shortName>PH domain-containing family M member 3</shortName>
    </recommendedName>
</protein>
<proteinExistence type="evidence at transcript level"/>